<protein>
    <recommendedName>
        <fullName evidence="1">Urease accessory protein UreG</fullName>
    </recommendedName>
</protein>
<gene>
    <name evidence="1" type="primary">ureG</name>
    <name type="ordered locus">LHK_01042</name>
</gene>
<sequence length="211" mass="22772">MKKITRIGIGGPVGSGKTAIIEAITPLMLDLGIKVLIITNDVVTTEDARHVQRTLKGVLVEEKIIGVETGACPHTAVREDPSMNLAAVEDMESRFPDTDVVLIESGGDNLTLTFSPALVDFFIYVIDVAAGDKIPRKNGPGISQSDILVINKTDLAPYVGASLEVMDRDSKFMRGDKPFIFTNCKTGEGIPELVHLIHDMALFDVPIKEAS</sequence>
<reference key="1">
    <citation type="journal article" date="2009" name="PLoS Genet.">
        <title>The complete genome and proteome of Laribacter hongkongensis reveal potential mechanisms for adaptations to different temperatures and habitats.</title>
        <authorList>
            <person name="Woo P.C.Y."/>
            <person name="Lau S.K.P."/>
            <person name="Tse H."/>
            <person name="Teng J.L.L."/>
            <person name="Curreem S.O."/>
            <person name="Tsang A.K.L."/>
            <person name="Fan R.Y.Y."/>
            <person name="Wong G.K.M."/>
            <person name="Huang Y."/>
            <person name="Loman N.J."/>
            <person name="Snyder L.A.S."/>
            <person name="Cai J.J."/>
            <person name="Huang J.-D."/>
            <person name="Mak W."/>
            <person name="Pallen M.J."/>
            <person name="Lok S."/>
            <person name="Yuen K.-Y."/>
        </authorList>
    </citation>
    <scope>NUCLEOTIDE SEQUENCE [LARGE SCALE GENOMIC DNA]</scope>
    <source>
        <strain>HLHK9</strain>
    </source>
</reference>
<feature type="chain" id="PRO_1000184263" description="Urease accessory protein UreG">
    <location>
        <begin position="1"/>
        <end position="211"/>
    </location>
</feature>
<feature type="binding site" evidence="1">
    <location>
        <begin position="11"/>
        <end position="18"/>
    </location>
    <ligand>
        <name>GTP</name>
        <dbReference type="ChEBI" id="CHEBI:37565"/>
    </ligand>
</feature>
<comment type="function">
    <text evidence="1">Facilitates the functional incorporation of the urease nickel metallocenter. This process requires GTP hydrolysis, probably effectuated by UreG.</text>
</comment>
<comment type="subunit">
    <text evidence="1">Homodimer. UreD, UreF and UreG form a complex that acts as a GTP-hydrolysis-dependent molecular chaperone, activating the urease apoprotein by helping to assemble the nickel containing metallocenter of UreC. The UreE protein probably delivers the nickel.</text>
</comment>
<comment type="subcellular location">
    <subcellularLocation>
        <location evidence="1">Cytoplasm</location>
    </subcellularLocation>
</comment>
<comment type="similarity">
    <text evidence="1">Belongs to the SIMIBI class G3E GTPase family. UreG subfamily.</text>
</comment>
<proteinExistence type="inferred from homology"/>
<organism>
    <name type="scientific">Laribacter hongkongensis (strain HLHK9)</name>
    <dbReference type="NCBI Taxonomy" id="557598"/>
    <lineage>
        <taxon>Bacteria</taxon>
        <taxon>Pseudomonadati</taxon>
        <taxon>Pseudomonadota</taxon>
        <taxon>Betaproteobacteria</taxon>
        <taxon>Neisseriales</taxon>
        <taxon>Aquaspirillaceae</taxon>
        <taxon>Laribacter</taxon>
    </lineage>
</organism>
<dbReference type="EMBL" id="CP001154">
    <property type="protein sequence ID" value="ACO74034.1"/>
    <property type="molecule type" value="Genomic_DNA"/>
</dbReference>
<dbReference type="RefSeq" id="WP_012696524.1">
    <property type="nucleotide sequence ID" value="NC_012559.1"/>
</dbReference>
<dbReference type="SMR" id="C1D603"/>
<dbReference type="STRING" id="557598.LHK_01042"/>
<dbReference type="GeneID" id="75109210"/>
<dbReference type="KEGG" id="lhk:LHK_01042"/>
<dbReference type="eggNOG" id="COG0378">
    <property type="taxonomic scope" value="Bacteria"/>
</dbReference>
<dbReference type="HOGENOM" id="CLU_072144_1_0_4"/>
<dbReference type="Proteomes" id="UP000002010">
    <property type="component" value="Chromosome"/>
</dbReference>
<dbReference type="GO" id="GO:0005737">
    <property type="term" value="C:cytoplasm"/>
    <property type="evidence" value="ECO:0007669"/>
    <property type="project" value="UniProtKB-SubCell"/>
</dbReference>
<dbReference type="GO" id="GO:0005525">
    <property type="term" value="F:GTP binding"/>
    <property type="evidence" value="ECO:0007669"/>
    <property type="project" value="UniProtKB-KW"/>
</dbReference>
<dbReference type="GO" id="GO:0003924">
    <property type="term" value="F:GTPase activity"/>
    <property type="evidence" value="ECO:0007669"/>
    <property type="project" value="InterPro"/>
</dbReference>
<dbReference type="GO" id="GO:0016151">
    <property type="term" value="F:nickel cation binding"/>
    <property type="evidence" value="ECO:0007669"/>
    <property type="project" value="UniProtKB-UniRule"/>
</dbReference>
<dbReference type="GO" id="GO:0043419">
    <property type="term" value="P:urea catabolic process"/>
    <property type="evidence" value="ECO:0007669"/>
    <property type="project" value="InterPro"/>
</dbReference>
<dbReference type="Gene3D" id="3.40.50.300">
    <property type="entry name" value="P-loop containing nucleotide triphosphate hydrolases"/>
    <property type="match status" value="1"/>
</dbReference>
<dbReference type="HAMAP" id="MF_01389">
    <property type="entry name" value="UreG"/>
    <property type="match status" value="1"/>
</dbReference>
<dbReference type="InterPro" id="IPR003495">
    <property type="entry name" value="CobW/HypB/UreG_nucleotide-bd"/>
</dbReference>
<dbReference type="InterPro" id="IPR027417">
    <property type="entry name" value="P-loop_NTPase"/>
</dbReference>
<dbReference type="InterPro" id="IPR004400">
    <property type="entry name" value="UreG"/>
</dbReference>
<dbReference type="NCBIfam" id="TIGR00101">
    <property type="entry name" value="ureG"/>
    <property type="match status" value="1"/>
</dbReference>
<dbReference type="PANTHER" id="PTHR31715">
    <property type="entry name" value="UREASE ACCESSORY PROTEIN G"/>
    <property type="match status" value="1"/>
</dbReference>
<dbReference type="PANTHER" id="PTHR31715:SF0">
    <property type="entry name" value="UREASE ACCESSORY PROTEIN G"/>
    <property type="match status" value="1"/>
</dbReference>
<dbReference type="Pfam" id="PF02492">
    <property type="entry name" value="cobW"/>
    <property type="match status" value="1"/>
</dbReference>
<dbReference type="PIRSF" id="PIRSF005624">
    <property type="entry name" value="Ni-bind_GTPase"/>
    <property type="match status" value="1"/>
</dbReference>
<dbReference type="SUPFAM" id="SSF52540">
    <property type="entry name" value="P-loop containing nucleoside triphosphate hydrolases"/>
    <property type="match status" value="1"/>
</dbReference>
<evidence type="ECO:0000255" key="1">
    <source>
        <dbReference type="HAMAP-Rule" id="MF_01389"/>
    </source>
</evidence>
<accession>C1D603</accession>
<name>UREG_LARHH</name>
<keyword id="KW-0143">Chaperone</keyword>
<keyword id="KW-0963">Cytoplasm</keyword>
<keyword id="KW-0342">GTP-binding</keyword>
<keyword id="KW-0996">Nickel insertion</keyword>
<keyword id="KW-0547">Nucleotide-binding</keyword>
<keyword id="KW-1185">Reference proteome</keyword>